<protein>
    <recommendedName>
        <fullName>Tegument protein UL51 homolog</fullName>
    </recommendedName>
</protein>
<accession>Q9E6M5</accession>
<keyword id="KW-1035">Host cytoplasm</keyword>
<keyword id="KW-1040">Host Golgi apparatus</keyword>
<keyword id="KW-0597">Phosphoprotein</keyword>
<keyword id="KW-1185">Reference proteome</keyword>
<keyword id="KW-0946">Virion</keyword>
<keyword id="KW-0920">Virion tegument</keyword>
<organismHost>
    <name type="scientific">Gallus gallus</name>
    <name type="common">Chicken</name>
    <dbReference type="NCBI Taxonomy" id="9031"/>
</organismHost>
<evidence type="ECO:0000250" key="1">
    <source>
        <dbReference type="UniProtKB" id="P10235"/>
    </source>
</evidence>
<evidence type="ECO:0000250" key="2">
    <source>
        <dbReference type="UniProtKB" id="P16823"/>
    </source>
</evidence>
<evidence type="ECO:0000305" key="3"/>
<gene>
    <name type="primary">MDV065</name>
</gene>
<organism>
    <name type="scientific">Gallid herpesvirus 2 (strain Chicken/Md5/ATCC VR-987)</name>
    <name type="common">GaHV-2</name>
    <name type="synonym">Marek's disease herpesvirus type 1</name>
    <dbReference type="NCBI Taxonomy" id="10389"/>
    <lineage>
        <taxon>Viruses</taxon>
        <taxon>Duplodnaviria</taxon>
        <taxon>Heunggongvirae</taxon>
        <taxon>Peploviricota</taxon>
        <taxon>Herviviricetes</taxon>
        <taxon>Herpesvirales</taxon>
        <taxon>Orthoherpesviridae</taxon>
        <taxon>Alphaherpesvirinae</taxon>
        <taxon>Mardivirus</taxon>
        <taxon>Mardivirus gallidalpha2</taxon>
        <taxon>Gallid alphaherpesvirus 2</taxon>
    </lineage>
</organism>
<proteinExistence type="inferred from homology"/>
<sequence>MQTSSRTYDYRRLKAEYKQLSASSSTDKAMHRLREAVHAVNILLPTPITLEMALLSADGVRKLVRGQSLARTYSACLRNLECLSRHVPGRGNPGLDAVVETHRENAQRVADTCAAALLHMYMSIGTGRTDAFVEHAIQLTAATETAMSDIALVERALGLTHPHNERSPASMDESTGMKNCAVLSHMNDNKDDAVNMEPGYNTTIDRLISSPLLSQSKRERTIISTPAVTPKDNCPPVKFSRENNLITEL</sequence>
<feature type="chain" id="PRO_0000406562" description="Tegument protein UL51 homolog">
    <location>
        <begin position="1"/>
        <end position="249"/>
    </location>
</feature>
<comment type="function">
    <text evidence="1">Plays several roles during the time course of infection, including egress of virus particles from the perinuclear space and secondary envelopment of cytoplasmic capsids that bud into specific trans-Golgi network (TGN)-derived membranes.</text>
</comment>
<comment type="subunit">
    <text evidence="1 2">Oligomerizes. Interacts with MDV019; this interaction mediates MDV019 incorporation to virions.</text>
</comment>
<comment type="subcellular location">
    <subcellularLocation>
        <location evidence="1">Virion tegument</location>
    </subcellularLocation>
    <subcellularLocation>
        <location evidence="1">Host cytoplasm</location>
    </subcellularLocation>
    <subcellularLocation>
        <location evidence="1">Host Golgi apparatus</location>
    </subcellularLocation>
</comment>
<comment type="PTM">
    <text evidence="1">Phosphorylated.</text>
</comment>
<comment type="similarity">
    <text evidence="3">Belongs to the herpesviridae UL51 family.</text>
</comment>
<name>TEG7_GAHVM</name>
<dbReference type="EMBL" id="AF243438">
    <property type="protein sequence ID" value="AAG14245.1"/>
    <property type="molecule type" value="Genomic_DNA"/>
</dbReference>
<dbReference type="RefSeq" id="YP_001033981.1">
    <property type="nucleotide sequence ID" value="NC_002229.3"/>
</dbReference>
<dbReference type="SMR" id="Q9E6M5"/>
<dbReference type="GeneID" id="4811525"/>
<dbReference type="KEGG" id="vg:4811525"/>
<dbReference type="Proteomes" id="UP000008072">
    <property type="component" value="Segment"/>
</dbReference>
<dbReference type="GO" id="GO:0044177">
    <property type="term" value="C:host cell Golgi apparatus"/>
    <property type="evidence" value="ECO:0007669"/>
    <property type="project" value="UniProtKB-SubCell"/>
</dbReference>
<dbReference type="GO" id="GO:0019033">
    <property type="term" value="C:viral tegument"/>
    <property type="evidence" value="ECO:0007669"/>
    <property type="project" value="UniProtKB-SubCell"/>
</dbReference>
<dbReference type="InterPro" id="IPR007625">
    <property type="entry name" value="Herpes_UL51"/>
</dbReference>
<dbReference type="Pfam" id="PF04540">
    <property type="entry name" value="Herpes_UL51"/>
    <property type="match status" value="1"/>
</dbReference>
<reference key="1">
    <citation type="journal article" date="2000" name="J. Virol.">
        <title>The genome of a very virulent Marek's disease virus.</title>
        <authorList>
            <person name="Tulman E.R."/>
            <person name="Afonso C.L."/>
            <person name="Lu Z."/>
            <person name="Zsak L."/>
            <person name="Rock D.L."/>
            <person name="Kutish G.F."/>
        </authorList>
    </citation>
    <scope>NUCLEOTIDE SEQUENCE [LARGE SCALE GENOMIC DNA]</scope>
</reference>